<reference key="1">
    <citation type="journal article" date="2009" name="PLoS ONE">
        <title>Non mycobacterial virulence genes in the genome of the emerging pathogen Mycobacterium abscessus.</title>
        <authorList>
            <person name="Ripoll F."/>
            <person name="Pasek S."/>
            <person name="Schenowitz C."/>
            <person name="Dossat C."/>
            <person name="Barbe V."/>
            <person name="Rottman M."/>
            <person name="Macheras E."/>
            <person name="Heym B."/>
            <person name="Herrmann J.L."/>
            <person name="Daffe M."/>
            <person name="Brosch R."/>
            <person name="Risler J.L."/>
            <person name="Gaillard J.L."/>
        </authorList>
    </citation>
    <scope>NUCLEOTIDE SEQUENCE [LARGE SCALE GENOMIC DNA]</scope>
    <source>
        <strain>ATCC 19977 / DSM 44196 / CCUG 20993 / CIP 104536 / JCM 13569 / NCTC 13031 / TMC 1543 / L948</strain>
    </source>
</reference>
<feature type="chain" id="PRO_1000101047" description="Large ribosomal subunit protein bL36">
    <location>
        <begin position="1"/>
        <end position="37"/>
    </location>
</feature>
<accession>B1MGA3</accession>
<gene>
    <name evidence="1" type="primary">rpmJ</name>
    <name type="ordered locus">MAB_5000c</name>
</gene>
<dbReference type="EMBL" id="CU458896">
    <property type="protein sequence ID" value="CAM63848.1"/>
    <property type="molecule type" value="Genomic_DNA"/>
</dbReference>
<dbReference type="RefSeq" id="WP_003886927.1">
    <property type="nucleotide sequence ID" value="NZ_MLCG01000001.1"/>
</dbReference>
<dbReference type="SMR" id="B1MGA3"/>
<dbReference type="GeneID" id="93380713"/>
<dbReference type="KEGG" id="mab:MAB_5000c"/>
<dbReference type="Proteomes" id="UP000007137">
    <property type="component" value="Chromosome"/>
</dbReference>
<dbReference type="GO" id="GO:0005737">
    <property type="term" value="C:cytoplasm"/>
    <property type="evidence" value="ECO:0007669"/>
    <property type="project" value="UniProtKB-ARBA"/>
</dbReference>
<dbReference type="GO" id="GO:1990904">
    <property type="term" value="C:ribonucleoprotein complex"/>
    <property type="evidence" value="ECO:0007669"/>
    <property type="project" value="UniProtKB-KW"/>
</dbReference>
<dbReference type="GO" id="GO:0005840">
    <property type="term" value="C:ribosome"/>
    <property type="evidence" value="ECO:0007669"/>
    <property type="project" value="UniProtKB-KW"/>
</dbReference>
<dbReference type="GO" id="GO:0003735">
    <property type="term" value="F:structural constituent of ribosome"/>
    <property type="evidence" value="ECO:0007669"/>
    <property type="project" value="InterPro"/>
</dbReference>
<dbReference type="GO" id="GO:0006412">
    <property type="term" value="P:translation"/>
    <property type="evidence" value="ECO:0007669"/>
    <property type="project" value="UniProtKB-UniRule"/>
</dbReference>
<dbReference type="HAMAP" id="MF_00251">
    <property type="entry name" value="Ribosomal_bL36"/>
    <property type="match status" value="1"/>
</dbReference>
<dbReference type="InterPro" id="IPR000473">
    <property type="entry name" value="Ribosomal_bL36"/>
</dbReference>
<dbReference type="InterPro" id="IPR035977">
    <property type="entry name" value="Ribosomal_bL36_sp"/>
</dbReference>
<dbReference type="NCBIfam" id="TIGR01022">
    <property type="entry name" value="rpmJ_bact"/>
    <property type="match status" value="1"/>
</dbReference>
<dbReference type="PANTHER" id="PTHR42888">
    <property type="entry name" value="50S RIBOSOMAL PROTEIN L36, CHLOROPLASTIC"/>
    <property type="match status" value="1"/>
</dbReference>
<dbReference type="PANTHER" id="PTHR42888:SF1">
    <property type="entry name" value="LARGE RIBOSOMAL SUBUNIT PROTEIN BL36C"/>
    <property type="match status" value="1"/>
</dbReference>
<dbReference type="Pfam" id="PF00444">
    <property type="entry name" value="Ribosomal_L36"/>
    <property type="match status" value="1"/>
</dbReference>
<dbReference type="SUPFAM" id="SSF57840">
    <property type="entry name" value="Ribosomal protein L36"/>
    <property type="match status" value="1"/>
</dbReference>
<dbReference type="PROSITE" id="PS00828">
    <property type="entry name" value="RIBOSOMAL_L36"/>
    <property type="match status" value="1"/>
</dbReference>
<keyword id="KW-1185">Reference proteome</keyword>
<keyword id="KW-0687">Ribonucleoprotein</keyword>
<keyword id="KW-0689">Ribosomal protein</keyword>
<protein>
    <recommendedName>
        <fullName evidence="1">Large ribosomal subunit protein bL36</fullName>
    </recommendedName>
    <alternativeName>
        <fullName evidence="2">50S ribosomal protein L36</fullName>
    </alternativeName>
</protein>
<comment type="similarity">
    <text evidence="1">Belongs to the bacterial ribosomal protein bL36 family.</text>
</comment>
<sequence>MKVNPSVKPICDKCRVIRRHGRVMVICQDPRHKQRQG</sequence>
<evidence type="ECO:0000255" key="1">
    <source>
        <dbReference type="HAMAP-Rule" id="MF_00251"/>
    </source>
</evidence>
<evidence type="ECO:0000305" key="2"/>
<organism>
    <name type="scientific">Mycobacteroides abscessus (strain ATCC 19977 / DSM 44196 / CCUG 20993 / CIP 104536 / JCM 13569 / NCTC 13031 / TMC 1543 / L948)</name>
    <name type="common">Mycobacterium abscessus</name>
    <dbReference type="NCBI Taxonomy" id="561007"/>
    <lineage>
        <taxon>Bacteria</taxon>
        <taxon>Bacillati</taxon>
        <taxon>Actinomycetota</taxon>
        <taxon>Actinomycetes</taxon>
        <taxon>Mycobacteriales</taxon>
        <taxon>Mycobacteriaceae</taxon>
        <taxon>Mycobacteroides</taxon>
        <taxon>Mycobacteroides abscessus</taxon>
    </lineage>
</organism>
<proteinExistence type="inferred from homology"/>
<name>RL36_MYCA9</name>